<feature type="chain" id="PRO_1000124970" description="Nucleoside diphosphate kinase">
    <location>
        <begin position="1"/>
        <end position="140"/>
    </location>
</feature>
<feature type="active site" description="Pros-phosphohistidine intermediate" evidence="1">
    <location>
        <position position="117"/>
    </location>
</feature>
<feature type="binding site" evidence="1">
    <location>
        <position position="11"/>
    </location>
    <ligand>
        <name>ATP</name>
        <dbReference type="ChEBI" id="CHEBI:30616"/>
    </ligand>
</feature>
<feature type="binding site" evidence="1">
    <location>
        <position position="59"/>
    </location>
    <ligand>
        <name>ATP</name>
        <dbReference type="ChEBI" id="CHEBI:30616"/>
    </ligand>
</feature>
<feature type="binding site" evidence="1">
    <location>
        <position position="87"/>
    </location>
    <ligand>
        <name>ATP</name>
        <dbReference type="ChEBI" id="CHEBI:30616"/>
    </ligand>
</feature>
<feature type="binding site" evidence="1">
    <location>
        <position position="93"/>
    </location>
    <ligand>
        <name>ATP</name>
        <dbReference type="ChEBI" id="CHEBI:30616"/>
    </ligand>
</feature>
<feature type="binding site" evidence="1">
    <location>
        <position position="104"/>
    </location>
    <ligand>
        <name>ATP</name>
        <dbReference type="ChEBI" id="CHEBI:30616"/>
    </ligand>
</feature>
<feature type="binding site" evidence="1">
    <location>
        <position position="114"/>
    </location>
    <ligand>
        <name>ATP</name>
        <dbReference type="ChEBI" id="CHEBI:30616"/>
    </ligand>
</feature>
<comment type="function">
    <text evidence="1">Major role in the synthesis of nucleoside triphosphates other than ATP. The ATP gamma phosphate is transferred to the NDP beta phosphate via a ping-pong mechanism, using a phosphorylated active-site intermediate.</text>
</comment>
<comment type="catalytic activity">
    <reaction evidence="1">
        <text>a 2'-deoxyribonucleoside 5'-diphosphate + ATP = a 2'-deoxyribonucleoside 5'-triphosphate + ADP</text>
        <dbReference type="Rhea" id="RHEA:44640"/>
        <dbReference type="ChEBI" id="CHEBI:30616"/>
        <dbReference type="ChEBI" id="CHEBI:61560"/>
        <dbReference type="ChEBI" id="CHEBI:73316"/>
        <dbReference type="ChEBI" id="CHEBI:456216"/>
        <dbReference type="EC" id="2.7.4.6"/>
    </reaction>
</comment>
<comment type="catalytic activity">
    <reaction evidence="1">
        <text>a ribonucleoside 5'-diphosphate + ATP = a ribonucleoside 5'-triphosphate + ADP</text>
        <dbReference type="Rhea" id="RHEA:18113"/>
        <dbReference type="ChEBI" id="CHEBI:30616"/>
        <dbReference type="ChEBI" id="CHEBI:57930"/>
        <dbReference type="ChEBI" id="CHEBI:61557"/>
        <dbReference type="ChEBI" id="CHEBI:456216"/>
        <dbReference type="EC" id="2.7.4.6"/>
    </reaction>
</comment>
<comment type="cofactor">
    <cofactor evidence="1">
        <name>Mg(2+)</name>
        <dbReference type="ChEBI" id="CHEBI:18420"/>
    </cofactor>
</comment>
<comment type="subunit">
    <text evidence="1">Homotetramer.</text>
</comment>
<comment type="subcellular location">
    <subcellularLocation>
        <location evidence="1">Cytoplasm</location>
    </subcellularLocation>
</comment>
<comment type="similarity">
    <text evidence="1">Belongs to the NDK family.</text>
</comment>
<keyword id="KW-0067">ATP-binding</keyword>
<keyword id="KW-0963">Cytoplasm</keyword>
<keyword id="KW-0418">Kinase</keyword>
<keyword id="KW-0460">Magnesium</keyword>
<keyword id="KW-0479">Metal-binding</keyword>
<keyword id="KW-0546">Nucleotide metabolism</keyword>
<keyword id="KW-0547">Nucleotide-binding</keyword>
<keyword id="KW-0597">Phosphoprotein</keyword>
<keyword id="KW-0808">Transferase</keyword>
<proteinExistence type="inferred from homology"/>
<accession>B2SFK0</accession>
<name>NDK_FRATM</name>
<organism>
    <name type="scientific">Francisella tularensis subsp. mediasiatica (strain FSC147)</name>
    <dbReference type="NCBI Taxonomy" id="441952"/>
    <lineage>
        <taxon>Bacteria</taxon>
        <taxon>Pseudomonadati</taxon>
        <taxon>Pseudomonadota</taxon>
        <taxon>Gammaproteobacteria</taxon>
        <taxon>Thiotrichales</taxon>
        <taxon>Francisellaceae</taxon>
        <taxon>Francisella</taxon>
    </lineage>
</organism>
<sequence length="140" mass="15410">MTKQRTLSIIKPDAVEKNVIGEIYSRFEKAGLRIIAAKMKHLSKAEAEGFYAVHKDRPFFSALVEFMISGPVIIQVLEGENAIAKNRELMGATNPKEAKAGTIRADFADSIDANAVHGSDAEDTAAQEIRYFFSDTEIFG</sequence>
<reference key="1">
    <citation type="journal article" date="2009" name="PLoS Pathog.">
        <title>Molecular evolutionary consequences of niche restriction in Francisella tularensis, a facultative intracellular pathogen.</title>
        <authorList>
            <person name="Larsson P."/>
            <person name="Elfsmark D."/>
            <person name="Svensson K."/>
            <person name="Wikstroem P."/>
            <person name="Forsman M."/>
            <person name="Brettin T."/>
            <person name="Keim P."/>
            <person name="Johansson A."/>
        </authorList>
    </citation>
    <scope>NUCLEOTIDE SEQUENCE [LARGE SCALE GENOMIC DNA]</scope>
    <source>
        <strain>FSC147</strain>
    </source>
</reference>
<protein>
    <recommendedName>
        <fullName evidence="1">Nucleoside diphosphate kinase</fullName>
        <shortName evidence="1">NDK</shortName>
        <shortName evidence="1">NDP kinase</shortName>
        <ecNumber evidence="1">2.7.4.6</ecNumber>
    </recommendedName>
    <alternativeName>
        <fullName evidence="1">Nucleoside-2-P kinase</fullName>
    </alternativeName>
</protein>
<gene>
    <name evidence="1" type="primary">ndk</name>
    <name type="ordered locus">FTM_0295</name>
</gene>
<evidence type="ECO:0000255" key="1">
    <source>
        <dbReference type="HAMAP-Rule" id="MF_00451"/>
    </source>
</evidence>
<dbReference type="EC" id="2.7.4.6" evidence="1"/>
<dbReference type="EMBL" id="CP000915">
    <property type="protein sequence ID" value="ACD30353.1"/>
    <property type="molecule type" value="Genomic_DNA"/>
</dbReference>
<dbReference type="SMR" id="B2SFK0"/>
<dbReference type="KEGG" id="ftm:FTM_0295"/>
<dbReference type="HOGENOM" id="CLU_060216_8_1_6"/>
<dbReference type="GO" id="GO:0005737">
    <property type="term" value="C:cytoplasm"/>
    <property type="evidence" value="ECO:0007669"/>
    <property type="project" value="UniProtKB-SubCell"/>
</dbReference>
<dbReference type="GO" id="GO:0005524">
    <property type="term" value="F:ATP binding"/>
    <property type="evidence" value="ECO:0007669"/>
    <property type="project" value="UniProtKB-UniRule"/>
</dbReference>
<dbReference type="GO" id="GO:0046872">
    <property type="term" value="F:metal ion binding"/>
    <property type="evidence" value="ECO:0007669"/>
    <property type="project" value="UniProtKB-KW"/>
</dbReference>
<dbReference type="GO" id="GO:0004550">
    <property type="term" value="F:nucleoside diphosphate kinase activity"/>
    <property type="evidence" value="ECO:0007669"/>
    <property type="project" value="UniProtKB-UniRule"/>
</dbReference>
<dbReference type="GO" id="GO:0006241">
    <property type="term" value="P:CTP biosynthetic process"/>
    <property type="evidence" value="ECO:0007669"/>
    <property type="project" value="UniProtKB-UniRule"/>
</dbReference>
<dbReference type="GO" id="GO:0006183">
    <property type="term" value="P:GTP biosynthetic process"/>
    <property type="evidence" value="ECO:0007669"/>
    <property type="project" value="UniProtKB-UniRule"/>
</dbReference>
<dbReference type="GO" id="GO:0006228">
    <property type="term" value="P:UTP biosynthetic process"/>
    <property type="evidence" value="ECO:0007669"/>
    <property type="project" value="UniProtKB-UniRule"/>
</dbReference>
<dbReference type="CDD" id="cd04413">
    <property type="entry name" value="NDPk_I"/>
    <property type="match status" value="1"/>
</dbReference>
<dbReference type="FunFam" id="3.30.70.141:FF:000001">
    <property type="entry name" value="Nucleoside diphosphate kinase"/>
    <property type="match status" value="1"/>
</dbReference>
<dbReference type="Gene3D" id="3.30.70.141">
    <property type="entry name" value="Nucleoside diphosphate kinase-like domain"/>
    <property type="match status" value="1"/>
</dbReference>
<dbReference type="HAMAP" id="MF_00451">
    <property type="entry name" value="NDP_kinase"/>
    <property type="match status" value="1"/>
</dbReference>
<dbReference type="InterPro" id="IPR034907">
    <property type="entry name" value="NDK-like_dom"/>
</dbReference>
<dbReference type="InterPro" id="IPR036850">
    <property type="entry name" value="NDK-like_dom_sf"/>
</dbReference>
<dbReference type="InterPro" id="IPR001564">
    <property type="entry name" value="Nucleoside_diP_kinase"/>
</dbReference>
<dbReference type="InterPro" id="IPR023005">
    <property type="entry name" value="Nucleoside_diP_kinase_AS"/>
</dbReference>
<dbReference type="NCBIfam" id="NF001908">
    <property type="entry name" value="PRK00668.1"/>
    <property type="match status" value="1"/>
</dbReference>
<dbReference type="PANTHER" id="PTHR46161">
    <property type="entry name" value="NUCLEOSIDE DIPHOSPHATE KINASE"/>
    <property type="match status" value="1"/>
</dbReference>
<dbReference type="PANTHER" id="PTHR46161:SF3">
    <property type="entry name" value="NUCLEOSIDE DIPHOSPHATE KINASE DDB_G0292928-RELATED"/>
    <property type="match status" value="1"/>
</dbReference>
<dbReference type="Pfam" id="PF00334">
    <property type="entry name" value="NDK"/>
    <property type="match status" value="1"/>
</dbReference>
<dbReference type="PRINTS" id="PR01243">
    <property type="entry name" value="NUCDPKINASE"/>
</dbReference>
<dbReference type="SMART" id="SM00562">
    <property type="entry name" value="NDK"/>
    <property type="match status" value="1"/>
</dbReference>
<dbReference type="SUPFAM" id="SSF54919">
    <property type="entry name" value="Nucleoside diphosphate kinase, NDK"/>
    <property type="match status" value="1"/>
</dbReference>
<dbReference type="PROSITE" id="PS00469">
    <property type="entry name" value="NDPK"/>
    <property type="match status" value="1"/>
</dbReference>
<dbReference type="PROSITE" id="PS51374">
    <property type="entry name" value="NDPK_LIKE"/>
    <property type="match status" value="1"/>
</dbReference>